<protein>
    <recommendedName>
        <fullName evidence="1">Small ribosomal subunit protein bS16</fullName>
    </recommendedName>
    <alternativeName>
        <fullName evidence="2">30S ribosomal protein S16</fullName>
    </alternativeName>
</protein>
<evidence type="ECO:0000255" key="1">
    <source>
        <dbReference type="HAMAP-Rule" id="MF_00385"/>
    </source>
</evidence>
<evidence type="ECO:0000305" key="2"/>
<keyword id="KW-0687">Ribonucleoprotein</keyword>
<keyword id="KW-0689">Ribosomal protein</keyword>
<sequence>MAVRIRLKRMGAKKKPFYRIVVADSRSPRDGRFIETIGTYNPITEPAEIKIDEELALKWLQNGAKPSDTVRNLLSKQGILEKFHNLKYGK</sequence>
<accession>C5D8U1</accession>
<reference key="1">
    <citation type="submission" date="2009-06" db="EMBL/GenBank/DDBJ databases">
        <title>Complete sequence of chromosome of Geopacillus sp. WCH70.</title>
        <authorList>
            <consortium name="US DOE Joint Genome Institute"/>
            <person name="Lucas S."/>
            <person name="Copeland A."/>
            <person name="Lapidus A."/>
            <person name="Glavina del Rio T."/>
            <person name="Dalin E."/>
            <person name="Tice H."/>
            <person name="Bruce D."/>
            <person name="Goodwin L."/>
            <person name="Pitluck S."/>
            <person name="Chertkov O."/>
            <person name="Brettin T."/>
            <person name="Detter J.C."/>
            <person name="Han C."/>
            <person name="Larimer F."/>
            <person name="Land M."/>
            <person name="Hauser L."/>
            <person name="Kyrpides N."/>
            <person name="Mikhailova N."/>
            <person name="Brumm P."/>
            <person name="Mead D.A."/>
            <person name="Richardson P."/>
        </authorList>
    </citation>
    <scope>NUCLEOTIDE SEQUENCE [LARGE SCALE GENOMIC DNA]</scope>
    <source>
        <strain>WCH70</strain>
    </source>
</reference>
<name>RS16_GEOSW</name>
<comment type="similarity">
    <text evidence="1">Belongs to the bacterial ribosomal protein bS16 family.</text>
</comment>
<gene>
    <name evidence="1" type="primary">rpsP</name>
    <name type="ordered locus">GWCH70_1088</name>
</gene>
<dbReference type="EMBL" id="CP001638">
    <property type="protein sequence ID" value="ACS23948.1"/>
    <property type="molecule type" value="Genomic_DNA"/>
</dbReference>
<dbReference type="SMR" id="C5D8U1"/>
<dbReference type="STRING" id="471223.GWCH70_1088"/>
<dbReference type="KEGG" id="gwc:GWCH70_1088"/>
<dbReference type="eggNOG" id="COG0228">
    <property type="taxonomic scope" value="Bacteria"/>
</dbReference>
<dbReference type="HOGENOM" id="CLU_100590_5_0_9"/>
<dbReference type="OrthoDB" id="9807878at2"/>
<dbReference type="GO" id="GO:0005737">
    <property type="term" value="C:cytoplasm"/>
    <property type="evidence" value="ECO:0007669"/>
    <property type="project" value="UniProtKB-ARBA"/>
</dbReference>
<dbReference type="GO" id="GO:0015935">
    <property type="term" value="C:small ribosomal subunit"/>
    <property type="evidence" value="ECO:0007669"/>
    <property type="project" value="TreeGrafter"/>
</dbReference>
<dbReference type="GO" id="GO:0003735">
    <property type="term" value="F:structural constituent of ribosome"/>
    <property type="evidence" value="ECO:0007669"/>
    <property type="project" value="InterPro"/>
</dbReference>
<dbReference type="GO" id="GO:0006412">
    <property type="term" value="P:translation"/>
    <property type="evidence" value="ECO:0007669"/>
    <property type="project" value="UniProtKB-UniRule"/>
</dbReference>
<dbReference type="FunFam" id="3.30.1320.10:FF:000002">
    <property type="entry name" value="30S ribosomal protein S16"/>
    <property type="match status" value="1"/>
</dbReference>
<dbReference type="Gene3D" id="3.30.1320.10">
    <property type="match status" value="1"/>
</dbReference>
<dbReference type="HAMAP" id="MF_00385">
    <property type="entry name" value="Ribosomal_bS16"/>
    <property type="match status" value="1"/>
</dbReference>
<dbReference type="InterPro" id="IPR000307">
    <property type="entry name" value="Ribosomal_bS16"/>
</dbReference>
<dbReference type="InterPro" id="IPR020592">
    <property type="entry name" value="Ribosomal_bS16_CS"/>
</dbReference>
<dbReference type="InterPro" id="IPR023803">
    <property type="entry name" value="Ribosomal_bS16_dom_sf"/>
</dbReference>
<dbReference type="NCBIfam" id="TIGR00002">
    <property type="entry name" value="S16"/>
    <property type="match status" value="1"/>
</dbReference>
<dbReference type="PANTHER" id="PTHR12919">
    <property type="entry name" value="30S RIBOSOMAL PROTEIN S16"/>
    <property type="match status" value="1"/>
</dbReference>
<dbReference type="PANTHER" id="PTHR12919:SF20">
    <property type="entry name" value="SMALL RIBOSOMAL SUBUNIT PROTEIN BS16M"/>
    <property type="match status" value="1"/>
</dbReference>
<dbReference type="Pfam" id="PF00886">
    <property type="entry name" value="Ribosomal_S16"/>
    <property type="match status" value="1"/>
</dbReference>
<dbReference type="SUPFAM" id="SSF54565">
    <property type="entry name" value="Ribosomal protein S16"/>
    <property type="match status" value="1"/>
</dbReference>
<dbReference type="PROSITE" id="PS00732">
    <property type="entry name" value="RIBOSOMAL_S16"/>
    <property type="match status" value="1"/>
</dbReference>
<organism>
    <name type="scientific">Geobacillus sp. (strain WCH70)</name>
    <dbReference type="NCBI Taxonomy" id="471223"/>
    <lineage>
        <taxon>Bacteria</taxon>
        <taxon>Bacillati</taxon>
        <taxon>Bacillota</taxon>
        <taxon>Bacilli</taxon>
        <taxon>Bacillales</taxon>
        <taxon>Anoxybacillaceae</taxon>
        <taxon>Geobacillus</taxon>
    </lineage>
</organism>
<feature type="chain" id="PRO_1000205763" description="Small ribosomal subunit protein bS16">
    <location>
        <begin position="1"/>
        <end position="90"/>
    </location>
</feature>
<proteinExistence type="inferred from homology"/>